<gene>
    <name evidence="1" type="primary">ulaE</name>
    <name type="synonym">sgaU</name>
    <name type="synonym">yjfW</name>
    <name type="ordered locus">b4197</name>
    <name type="ordered locus">JW4155</name>
</gene>
<protein>
    <recommendedName>
        <fullName evidence="1">L-ribulose-5-phosphate 3-epimerase UlaE</fullName>
        <ecNumber evidence="1">5.1.3.22</ecNumber>
    </recommendedName>
    <alternativeName>
        <fullName evidence="1">L-ascorbate utilization protein E</fullName>
    </alternativeName>
    <alternativeName>
        <fullName evidence="1">L-xylulose-5-phosphate 3-epimerase</fullName>
    </alternativeName>
</protein>
<name>ULAE_ECOLI</name>
<accession>P39305</accession>
<accession>Q2M6A8</accession>
<reference key="1">
    <citation type="journal article" date="1995" name="Nucleic Acids Res.">
        <title>Analysis of the Escherichia coli genome VI: DNA sequence of the region from 92.8 through 100 minutes.</title>
        <authorList>
            <person name="Burland V.D."/>
            <person name="Plunkett G. III"/>
            <person name="Sofia H.J."/>
            <person name="Daniels D.L."/>
            <person name="Blattner F.R."/>
        </authorList>
    </citation>
    <scope>NUCLEOTIDE SEQUENCE [LARGE SCALE GENOMIC DNA]</scope>
    <source>
        <strain>K12 / MG1655 / ATCC 47076</strain>
    </source>
</reference>
<reference key="2">
    <citation type="journal article" date="1997" name="Science">
        <title>The complete genome sequence of Escherichia coli K-12.</title>
        <authorList>
            <person name="Blattner F.R."/>
            <person name="Plunkett G. III"/>
            <person name="Bloch C.A."/>
            <person name="Perna N.T."/>
            <person name="Burland V."/>
            <person name="Riley M."/>
            <person name="Collado-Vides J."/>
            <person name="Glasner J.D."/>
            <person name="Rode C.K."/>
            <person name="Mayhew G.F."/>
            <person name="Gregor J."/>
            <person name="Davis N.W."/>
            <person name="Kirkpatrick H.A."/>
            <person name="Goeden M.A."/>
            <person name="Rose D.J."/>
            <person name="Mau B."/>
            <person name="Shao Y."/>
        </authorList>
    </citation>
    <scope>NUCLEOTIDE SEQUENCE [LARGE SCALE GENOMIC DNA]</scope>
    <source>
        <strain>K12 / MG1655 / ATCC 47076</strain>
    </source>
</reference>
<reference key="3">
    <citation type="journal article" date="2006" name="Mol. Syst. Biol.">
        <title>Highly accurate genome sequences of Escherichia coli K-12 strains MG1655 and W3110.</title>
        <authorList>
            <person name="Hayashi K."/>
            <person name="Morooka N."/>
            <person name="Yamamoto Y."/>
            <person name="Fujita K."/>
            <person name="Isono K."/>
            <person name="Choi S."/>
            <person name="Ohtsubo E."/>
            <person name="Baba T."/>
            <person name="Wanner B.L."/>
            <person name="Mori H."/>
            <person name="Horiuchi T."/>
        </authorList>
    </citation>
    <scope>NUCLEOTIDE SEQUENCE [LARGE SCALE GENOMIC DNA]</scope>
    <source>
        <strain>K12 / W3110 / ATCC 27325 / DSM 5911</strain>
    </source>
</reference>
<reference key="4">
    <citation type="journal article" date="1996" name="Genome Sci. Technol.">
        <title>Novel phosphotransferases system genes revealed by bacterial genome analysis: operons encoding homologues of sugar-specific permease domains of the phosphotransferase system and pentose catabolic enzymes.</title>
        <authorList>
            <person name="Reizer J."/>
            <person name="Charbit A."/>
            <person name="Reizer A."/>
            <person name="Saier M.H. Jr."/>
        </authorList>
    </citation>
    <scope>DISCUSSION OF SEQUENCE</scope>
</reference>
<reference key="5">
    <citation type="journal article" date="2002" name="J. Bacteriol.">
        <title>Utilization of L-ascorbate by Escherichia coli K-12: assignments of functions to products of the yjf-sga and yia-sgb operons.</title>
        <authorList>
            <person name="Yew W.S."/>
            <person name="Gerlt J.A."/>
        </authorList>
    </citation>
    <scope>FUNCTION</scope>
    <source>
        <strain>K12 / MG1655 / ATCC 47076</strain>
    </source>
</reference>
<reference key="6">
    <citation type="journal article" date="2002" name="J. Bacteriol.">
        <title>The gene yjfQ encodes the repressor of the yjfR-X regulon (ula), which is involved in L-ascorbate metabolism in Escherichia coli.</title>
        <authorList>
            <person name="Campos E."/>
            <person name="Aguilar J."/>
            <person name="Baldoma L."/>
            <person name="Badia J."/>
        </authorList>
    </citation>
    <scope>TRANSCRIPTIONAL REGULATION</scope>
</reference>
<reference key="7">
    <citation type="journal article" date="2004" name="J. Bacteriol.">
        <title>Regulation of expression of the divergent ulaG and ulaABCDEF operons involved in L-ascorbate dissimilation in Escherichia coli.</title>
        <authorList>
            <person name="Campos E."/>
            <person name="Baldoma L."/>
            <person name="Aguilar J."/>
            <person name="Badia J."/>
        </authorList>
    </citation>
    <scope>TRANSCRIPTIONAL REGULATION</scope>
</reference>
<organism>
    <name type="scientific">Escherichia coli (strain K12)</name>
    <dbReference type="NCBI Taxonomy" id="83333"/>
    <lineage>
        <taxon>Bacteria</taxon>
        <taxon>Pseudomonadati</taxon>
        <taxon>Pseudomonadota</taxon>
        <taxon>Gammaproteobacteria</taxon>
        <taxon>Enterobacterales</taxon>
        <taxon>Enterobacteriaceae</taxon>
        <taxon>Escherichia</taxon>
    </lineage>
</organism>
<proteinExistence type="evidence at transcript level"/>
<comment type="function">
    <text evidence="1 2">Catalyzes the isomerization of L-xylulose-5-phosphate to L-ribulose-5-phosphate. Is involved in the anaerobic L-ascorbate utilization.</text>
</comment>
<comment type="catalytic activity">
    <reaction evidence="1">
        <text>L-ribulose 5-phosphate = L-xylulose 5-phosphate</text>
        <dbReference type="Rhea" id="RHEA:18497"/>
        <dbReference type="ChEBI" id="CHEBI:57829"/>
        <dbReference type="ChEBI" id="CHEBI:58226"/>
        <dbReference type="EC" id="5.1.3.22"/>
    </reaction>
</comment>
<comment type="pathway">
    <text evidence="1">Cofactor degradation; L-ascorbate degradation; D-xylulose 5-phosphate from L-ascorbate: step 3/4.</text>
</comment>
<comment type="induction">
    <text evidence="1 3 4">Induced by L-ascorbate. Repressed by UlaR.</text>
</comment>
<comment type="similarity">
    <text evidence="1">Belongs to the L-ribulose-5-phosphate 3-epimerase family.</text>
</comment>
<feature type="chain" id="PRO_0000097716" description="L-ribulose-5-phosphate 3-epimerase UlaE">
    <location>
        <begin position="1"/>
        <end position="284"/>
    </location>
</feature>
<sequence length="284" mass="32007">MLSKQIPLGIYEKALPAGECWLERLQLAKTLGFDFVEMSVDETDDRLSRLNWSREQRLALVNAIVETGVRVPSMCLSAHRRFPLGSEDDAVRAQGLEIMRKAIQFAQDVGIRVIQLAGYDVYYQEANNETRRRFRDGLKESVEMASRAQVTLAMEIMDYPLMSSISKALGYAHYLNNPWFQLYPDIGNLSAWDNDVQMELQAGIGHIVAVHVKDTKPGVFKNVPFGEGVVDFERCFETLKQSGYCGPYLIEMWSETAEDPAAEVAKARDWVKARMAKAGMVEAA</sequence>
<evidence type="ECO:0000255" key="1">
    <source>
        <dbReference type="HAMAP-Rule" id="MF_01951"/>
    </source>
</evidence>
<evidence type="ECO:0000269" key="2">
    <source>
    </source>
</evidence>
<evidence type="ECO:0000269" key="3">
    <source>
    </source>
</evidence>
<evidence type="ECO:0000269" key="4">
    <source>
    </source>
</evidence>
<keyword id="KW-0413">Isomerase</keyword>
<keyword id="KW-1185">Reference proteome</keyword>
<dbReference type="EC" id="5.1.3.22" evidence="1"/>
<dbReference type="EMBL" id="U14003">
    <property type="protein sequence ID" value="AAA97093.1"/>
    <property type="molecule type" value="Genomic_DNA"/>
</dbReference>
<dbReference type="EMBL" id="U00096">
    <property type="protein sequence ID" value="AAC77154.1"/>
    <property type="molecule type" value="Genomic_DNA"/>
</dbReference>
<dbReference type="EMBL" id="AP009048">
    <property type="protein sequence ID" value="BAE78198.1"/>
    <property type="molecule type" value="Genomic_DNA"/>
</dbReference>
<dbReference type="PIR" id="S56422">
    <property type="entry name" value="S56422"/>
</dbReference>
<dbReference type="RefSeq" id="NP_418618.1">
    <property type="nucleotide sequence ID" value="NC_000913.3"/>
</dbReference>
<dbReference type="RefSeq" id="WP_000949502.1">
    <property type="nucleotide sequence ID" value="NZ_LN832404.1"/>
</dbReference>
<dbReference type="SMR" id="P39305"/>
<dbReference type="BioGRID" id="4262715">
    <property type="interactions" value="8"/>
</dbReference>
<dbReference type="FunCoup" id="P39305">
    <property type="interactions" value="72"/>
</dbReference>
<dbReference type="IntAct" id="P39305">
    <property type="interactions" value="1"/>
</dbReference>
<dbReference type="STRING" id="511145.b4197"/>
<dbReference type="PaxDb" id="511145-b4197"/>
<dbReference type="EnsemblBacteria" id="AAC77154">
    <property type="protein sequence ID" value="AAC77154"/>
    <property type="gene ID" value="b4197"/>
</dbReference>
<dbReference type="GeneID" id="948712"/>
<dbReference type="KEGG" id="ecj:JW4155"/>
<dbReference type="KEGG" id="eco:b4197"/>
<dbReference type="KEGG" id="ecoc:C3026_22670"/>
<dbReference type="PATRIC" id="fig|1411691.4.peg.2504"/>
<dbReference type="EchoBASE" id="EB2390"/>
<dbReference type="eggNOG" id="COG3623">
    <property type="taxonomic scope" value="Bacteria"/>
</dbReference>
<dbReference type="HOGENOM" id="CLU_082738_0_0_6"/>
<dbReference type="InParanoid" id="P39305"/>
<dbReference type="OMA" id="QAGMGHI"/>
<dbReference type="OrthoDB" id="3185623at2"/>
<dbReference type="PhylomeDB" id="P39305"/>
<dbReference type="BioCyc" id="EcoCyc:G7859-MONOMER"/>
<dbReference type="BioCyc" id="MetaCyc:G7859-MONOMER"/>
<dbReference type="UniPathway" id="UPA00263">
    <property type="reaction ID" value="UER00379"/>
</dbReference>
<dbReference type="PRO" id="PR:P39305"/>
<dbReference type="Proteomes" id="UP000000625">
    <property type="component" value="Chromosome"/>
</dbReference>
<dbReference type="GO" id="GO:0016861">
    <property type="term" value="F:intramolecular oxidoreductase activity, interconverting aldoses and ketoses"/>
    <property type="evidence" value="ECO:0007669"/>
    <property type="project" value="InterPro"/>
</dbReference>
<dbReference type="GO" id="GO:0034015">
    <property type="term" value="F:L-ribulose-5-phosphate 3-epimerase activity"/>
    <property type="evidence" value="ECO:0000314"/>
    <property type="project" value="EcoCyc"/>
</dbReference>
<dbReference type="GO" id="GO:0019854">
    <property type="term" value="P:L-ascorbic acid catabolic process"/>
    <property type="evidence" value="ECO:0007669"/>
    <property type="project" value="UniProtKB-UniRule"/>
</dbReference>
<dbReference type="GO" id="GO:0019852">
    <property type="term" value="P:L-ascorbic acid metabolic process"/>
    <property type="evidence" value="ECO:0000270"/>
    <property type="project" value="EcoCyc"/>
</dbReference>
<dbReference type="FunFam" id="3.20.20.150:FF:000003">
    <property type="entry name" value="L-ribulose-5-phosphate 3-epimerase UlaE"/>
    <property type="match status" value="1"/>
</dbReference>
<dbReference type="Gene3D" id="3.20.20.150">
    <property type="entry name" value="Divalent-metal-dependent TIM barrel enzymes"/>
    <property type="match status" value="1"/>
</dbReference>
<dbReference type="HAMAP" id="MF_01951">
    <property type="entry name" value="UlaE"/>
    <property type="match status" value="1"/>
</dbReference>
<dbReference type="InterPro" id="IPR004560">
    <property type="entry name" value="L-Ru-5P_3-Epase"/>
</dbReference>
<dbReference type="InterPro" id="IPR023492">
    <property type="entry name" value="L-Ru-5P_3-Epase_Enterobacteria"/>
</dbReference>
<dbReference type="InterPro" id="IPR050417">
    <property type="entry name" value="Sugar_Epim/Isomerase"/>
</dbReference>
<dbReference type="InterPro" id="IPR036237">
    <property type="entry name" value="Xyl_isomerase-like_sf"/>
</dbReference>
<dbReference type="InterPro" id="IPR013022">
    <property type="entry name" value="Xyl_isomerase-like_TIM-brl"/>
</dbReference>
<dbReference type="NCBIfam" id="TIGR00542">
    <property type="entry name" value="hxl6Piso_put"/>
    <property type="match status" value="1"/>
</dbReference>
<dbReference type="NCBIfam" id="NF009688">
    <property type="entry name" value="PRK13209.1"/>
    <property type="match status" value="1"/>
</dbReference>
<dbReference type="NCBIfam" id="NF009689">
    <property type="entry name" value="PRK13210.1"/>
    <property type="match status" value="1"/>
</dbReference>
<dbReference type="PANTHER" id="PTHR43489">
    <property type="entry name" value="ISOMERASE"/>
    <property type="match status" value="1"/>
</dbReference>
<dbReference type="PANTHER" id="PTHR43489:SF8">
    <property type="entry name" value="L-RIBULOSE-5-PHOSPHATE 3-EPIMERASE ULAE"/>
    <property type="match status" value="1"/>
</dbReference>
<dbReference type="Pfam" id="PF01261">
    <property type="entry name" value="AP_endonuc_2"/>
    <property type="match status" value="1"/>
</dbReference>
<dbReference type="SUPFAM" id="SSF51658">
    <property type="entry name" value="Xylose isomerase-like"/>
    <property type="match status" value="1"/>
</dbReference>